<comment type="function">
    <text evidence="1">Phosphoribosylformylglycinamidine synthase involved in the purines biosynthetic pathway. Catalyzes the ATP-dependent conversion of formylglycinamide ribonucleotide (FGAR) and glutamine to yield formylglycinamidine ribonucleotide (FGAM) and glutamate.</text>
</comment>
<comment type="catalytic activity">
    <reaction evidence="1">
        <text>N(2)-formyl-N(1)-(5-phospho-beta-D-ribosyl)glycinamide + L-glutamine + ATP + H2O = 2-formamido-N(1)-(5-O-phospho-beta-D-ribosyl)acetamidine + L-glutamate + ADP + phosphate + H(+)</text>
        <dbReference type="Rhea" id="RHEA:17129"/>
        <dbReference type="ChEBI" id="CHEBI:15377"/>
        <dbReference type="ChEBI" id="CHEBI:15378"/>
        <dbReference type="ChEBI" id="CHEBI:29985"/>
        <dbReference type="ChEBI" id="CHEBI:30616"/>
        <dbReference type="ChEBI" id="CHEBI:43474"/>
        <dbReference type="ChEBI" id="CHEBI:58359"/>
        <dbReference type="ChEBI" id="CHEBI:147286"/>
        <dbReference type="ChEBI" id="CHEBI:147287"/>
        <dbReference type="ChEBI" id="CHEBI:456216"/>
        <dbReference type="EC" id="6.3.5.3"/>
    </reaction>
</comment>
<comment type="pathway">
    <text evidence="1">Purine metabolism; IMP biosynthesis via de novo pathway; 5-amino-1-(5-phospho-D-ribosyl)imidazole from N(2)-formyl-N(1)-(5-phospho-D-ribosyl)glycinamide: step 1/2.</text>
</comment>
<comment type="subunit">
    <text evidence="1">Monomer.</text>
</comment>
<comment type="subcellular location">
    <subcellularLocation>
        <location evidence="1">Cytoplasm</location>
    </subcellularLocation>
</comment>
<comment type="similarity">
    <text evidence="1">In the N-terminal section; belongs to the FGAMS family.</text>
</comment>
<comment type="sequence caution" evidence="2">
    <conflict type="erroneous initiation">
        <sequence resource="EMBL-CDS" id="BAC93611"/>
    </conflict>
    <text>Extended N-terminus.</text>
</comment>
<organism>
    <name type="scientific">Vibrio vulnificus (strain YJ016)</name>
    <dbReference type="NCBI Taxonomy" id="196600"/>
    <lineage>
        <taxon>Bacteria</taxon>
        <taxon>Pseudomonadati</taxon>
        <taxon>Pseudomonadota</taxon>
        <taxon>Gammaproteobacteria</taxon>
        <taxon>Vibrionales</taxon>
        <taxon>Vibrionaceae</taxon>
        <taxon>Vibrio</taxon>
    </lineage>
</organism>
<protein>
    <recommendedName>
        <fullName evidence="1">Phosphoribosylformylglycinamidine synthase</fullName>
        <shortName evidence="1">FGAM synthase</shortName>
        <shortName evidence="1">FGAMS</shortName>
        <ecNumber evidence="1">6.3.5.3</ecNumber>
    </recommendedName>
    <alternativeName>
        <fullName evidence="1">Formylglycinamide ribonucleotide amidotransferase</fullName>
        <shortName evidence="1">FGAR amidotransferase</shortName>
        <shortName evidence="1">FGAR-AT</shortName>
    </alternativeName>
</protein>
<accession>Q7MN70</accession>
<dbReference type="EC" id="6.3.5.3" evidence="1"/>
<dbReference type="EMBL" id="BA000037">
    <property type="protein sequence ID" value="BAC93611.1"/>
    <property type="status" value="ALT_INIT"/>
    <property type="molecule type" value="Genomic_DNA"/>
</dbReference>
<dbReference type="RefSeq" id="WP_043877086.1">
    <property type="nucleotide sequence ID" value="NC_005139.1"/>
</dbReference>
<dbReference type="SMR" id="Q7MN70"/>
<dbReference type="STRING" id="672.VV93_v1c07870"/>
<dbReference type="KEGG" id="vvy:VV0847"/>
<dbReference type="PATRIC" id="fig|196600.6.peg.853"/>
<dbReference type="eggNOG" id="COG0046">
    <property type="taxonomic scope" value="Bacteria"/>
</dbReference>
<dbReference type="eggNOG" id="COG0047">
    <property type="taxonomic scope" value="Bacteria"/>
</dbReference>
<dbReference type="HOGENOM" id="CLU_001031_0_2_6"/>
<dbReference type="UniPathway" id="UPA00074">
    <property type="reaction ID" value="UER00128"/>
</dbReference>
<dbReference type="Proteomes" id="UP000002675">
    <property type="component" value="Chromosome I"/>
</dbReference>
<dbReference type="GO" id="GO:0005737">
    <property type="term" value="C:cytoplasm"/>
    <property type="evidence" value="ECO:0007669"/>
    <property type="project" value="UniProtKB-SubCell"/>
</dbReference>
<dbReference type="GO" id="GO:0005524">
    <property type="term" value="F:ATP binding"/>
    <property type="evidence" value="ECO:0007669"/>
    <property type="project" value="UniProtKB-UniRule"/>
</dbReference>
<dbReference type="GO" id="GO:0046872">
    <property type="term" value="F:metal ion binding"/>
    <property type="evidence" value="ECO:0007669"/>
    <property type="project" value="UniProtKB-KW"/>
</dbReference>
<dbReference type="GO" id="GO:0004642">
    <property type="term" value="F:phosphoribosylformylglycinamidine synthase activity"/>
    <property type="evidence" value="ECO:0007669"/>
    <property type="project" value="UniProtKB-UniRule"/>
</dbReference>
<dbReference type="GO" id="GO:0006189">
    <property type="term" value="P:'de novo' IMP biosynthetic process"/>
    <property type="evidence" value="ECO:0007669"/>
    <property type="project" value="UniProtKB-UniRule"/>
</dbReference>
<dbReference type="CDD" id="cd01740">
    <property type="entry name" value="GATase1_FGAR_AT"/>
    <property type="match status" value="1"/>
</dbReference>
<dbReference type="CDD" id="cd02203">
    <property type="entry name" value="PurL_repeat1"/>
    <property type="match status" value="1"/>
</dbReference>
<dbReference type="FunFam" id="1.10.8.750:FF:000002">
    <property type="entry name" value="Phosphoribosylformylglycinamidine synthase"/>
    <property type="match status" value="1"/>
</dbReference>
<dbReference type="FunFam" id="3.30.1330.10:FF:000002">
    <property type="entry name" value="Phosphoribosylformylglycinamidine synthase"/>
    <property type="match status" value="1"/>
</dbReference>
<dbReference type="FunFam" id="3.30.1330.10:FF:000005">
    <property type="entry name" value="Phosphoribosylformylglycinamidine synthase"/>
    <property type="match status" value="1"/>
</dbReference>
<dbReference type="FunFam" id="3.40.50.880:FF:000008">
    <property type="entry name" value="Phosphoribosylformylglycinamidine synthase"/>
    <property type="match status" value="1"/>
</dbReference>
<dbReference type="FunFam" id="3.90.650.10:FF:000002">
    <property type="entry name" value="Phosphoribosylformylglycinamidine synthase"/>
    <property type="match status" value="1"/>
</dbReference>
<dbReference type="FunFam" id="3.90.650.10:FF:000005">
    <property type="entry name" value="Phosphoribosylformylglycinamidine synthase"/>
    <property type="match status" value="1"/>
</dbReference>
<dbReference type="Gene3D" id="3.40.50.880">
    <property type="match status" value="1"/>
</dbReference>
<dbReference type="Gene3D" id="1.10.8.750">
    <property type="entry name" value="Phosphoribosylformylglycinamidine synthase, linker domain"/>
    <property type="match status" value="1"/>
</dbReference>
<dbReference type="Gene3D" id="3.90.650.10">
    <property type="entry name" value="PurM-like C-terminal domain"/>
    <property type="match status" value="2"/>
</dbReference>
<dbReference type="Gene3D" id="3.30.1330.10">
    <property type="entry name" value="PurM-like, N-terminal domain"/>
    <property type="match status" value="2"/>
</dbReference>
<dbReference type="HAMAP" id="MF_00419">
    <property type="entry name" value="PurL_1"/>
    <property type="match status" value="1"/>
</dbReference>
<dbReference type="InterPro" id="IPR029062">
    <property type="entry name" value="Class_I_gatase-like"/>
</dbReference>
<dbReference type="InterPro" id="IPR040707">
    <property type="entry name" value="FGAR-AT_N"/>
</dbReference>
<dbReference type="InterPro" id="IPR055181">
    <property type="entry name" value="FGAR-AT_PurM_N-like"/>
</dbReference>
<dbReference type="InterPro" id="IPR010073">
    <property type="entry name" value="PurL_large"/>
</dbReference>
<dbReference type="InterPro" id="IPR041609">
    <property type="entry name" value="PurL_linker"/>
</dbReference>
<dbReference type="InterPro" id="IPR010918">
    <property type="entry name" value="PurM-like_C_dom"/>
</dbReference>
<dbReference type="InterPro" id="IPR036676">
    <property type="entry name" value="PurM-like_C_sf"/>
</dbReference>
<dbReference type="InterPro" id="IPR036921">
    <property type="entry name" value="PurM-like_N_sf"/>
</dbReference>
<dbReference type="InterPro" id="IPR036604">
    <property type="entry name" value="PurS-like_sf"/>
</dbReference>
<dbReference type="NCBIfam" id="TIGR01735">
    <property type="entry name" value="FGAM_synt"/>
    <property type="match status" value="1"/>
</dbReference>
<dbReference type="NCBIfam" id="NF003672">
    <property type="entry name" value="PRK05297.1"/>
    <property type="match status" value="1"/>
</dbReference>
<dbReference type="PANTHER" id="PTHR10099">
    <property type="entry name" value="PHOSPHORIBOSYLFORMYLGLYCINAMIDINE SYNTHASE"/>
    <property type="match status" value="1"/>
</dbReference>
<dbReference type="PANTHER" id="PTHR10099:SF1">
    <property type="entry name" value="PHOSPHORIBOSYLFORMYLGLYCINAMIDINE SYNTHASE"/>
    <property type="match status" value="1"/>
</dbReference>
<dbReference type="Pfam" id="PF02769">
    <property type="entry name" value="AIRS_C"/>
    <property type="match status" value="2"/>
</dbReference>
<dbReference type="Pfam" id="PF18072">
    <property type="entry name" value="FGAR-AT_linker"/>
    <property type="match status" value="1"/>
</dbReference>
<dbReference type="Pfam" id="PF18076">
    <property type="entry name" value="FGAR-AT_N"/>
    <property type="match status" value="1"/>
</dbReference>
<dbReference type="Pfam" id="PF22689">
    <property type="entry name" value="FGAR-AT_PurM_N-like"/>
    <property type="match status" value="1"/>
</dbReference>
<dbReference type="Pfam" id="PF13507">
    <property type="entry name" value="GATase_5"/>
    <property type="match status" value="1"/>
</dbReference>
<dbReference type="SMART" id="SM01211">
    <property type="entry name" value="GATase_5"/>
    <property type="match status" value="1"/>
</dbReference>
<dbReference type="SUPFAM" id="SSF52317">
    <property type="entry name" value="Class I glutamine amidotransferase-like"/>
    <property type="match status" value="1"/>
</dbReference>
<dbReference type="SUPFAM" id="SSF109736">
    <property type="entry name" value="FGAM synthase PurL, linker domain"/>
    <property type="match status" value="1"/>
</dbReference>
<dbReference type="SUPFAM" id="SSF56042">
    <property type="entry name" value="PurM C-terminal domain-like"/>
    <property type="match status" value="2"/>
</dbReference>
<dbReference type="SUPFAM" id="SSF55326">
    <property type="entry name" value="PurM N-terminal domain-like"/>
    <property type="match status" value="2"/>
</dbReference>
<dbReference type="SUPFAM" id="SSF82697">
    <property type="entry name" value="PurS-like"/>
    <property type="match status" value="1"/>
</dbReference>
<dbReference type="PROSITE" id="PS51273">
    <property type="entry name" value="GATASE_TYPE_1"/>
    <property type="match status" value="1"/>
</dbReference>
<proteinExistence type="inferred from homology"/>
<feature type="chain" id="PRO_0000100423" description="Phosphoribosylformylglycinamidine synthase">
    <location>
        <begin position="1"/>
        <end position="1297"/>
    </location>
</feature>
<feature type="domain" description="Glutamine amidotransferase type-1" evidence="1">
    <location>
        <begin position="1044"/>
        <end position="1297"/>
    </location>
</feature>
<feature type="active site" description="Nucleophile" evidence="1">
    <location>
        <position position="1137"/>
    </location>
</feature>
<feature type="active site" evidence="1">
    <location>
        <position position="1262"/>
    </location>
</feature>
<feature type="active site" evidence="1">
    <location>
        <position position="1264"/>
    </location>
</feature>
<feature type="binding site" evidence="1">
    <location>
        <begin position="307"/>
        <end position="318"/>
    </location>
    <ligand>
        <name>ATP</name>
        <dbReference type="ChEBI" id="CHEBI:30616"/>
    </ligand>
</feature>
<feature type="binding site" evidence="1">
    <location>
        <position position="678"/>
    </location>
    <ligand>
        <name>ATP</name>
        <dbReference type="ChEBI" id="CHEBI:30616"/>
    </ligand>
</feature>
<feature type="binding site" evidence="1">
    <location>
        <position position="718"/>
    </location>
    <ligand>
        <name>Mg(2+)</name>
        <dbReference type="ChEBI" id="CHEBI:18420"/>
    </ligand>
</feature>
<feature type="binding site" evidence="1">
    <location>
        <position position="722"/>
    </location>
    <ligand>
        <name>Mg(2+)</name>
        <dbReference type="ChEBI" id="CHEBI:18420"/>
    </ligand>
</feature>
<feature type="binding site" evidence="1">
    <location>
        <position position="886"/>
    </location>
    <ligand>
        <name>Mg(2+)</name>
        <dbReference type="ChEBI" id="CHEBI:18420"/>
    </ligand>
</feature>
<name>PUR4_VIBVY</name>
<reference key="1">
    <citation type="journal article" date="2003" name="Genome Res.">
        <title>Comparative genome analysis of Vibrio vulnificus, a marine pathogen.</title>
        <authorList>
            <person name="Chen C.-Y."/>
            <person name="Wu K.-M."/>
            <person name="Chang Y.-C."/>
            <person name="Chang C.-H."/>
            <person name="Tsai H.-C."/>
            <person name="Liao T.-L."/>
            <person name="Liu Y.-M."/>
            <person name="Chen H.-J."/>
            <person name="Shen A.B.-T."/>
            <person name="Li J.-C."/>
            <person name="Su T.-L."/>
            <person name="Shao C.-P."/>
            <person name="Lee C.-T."/>
            <person name="Hor L.-I."/>
            <person name="Tsai S.-F."/>
        </authorList>
    </citation>
    <scope>NUCLEOTIDE SEQUENCE [LARGE SCALE GENOMIC DNA]</scope>
    <source>
        <strain>YJ016</strain>
    </source>
</reference>
<evidence type="ECO:0000255" key="1">
    <source>
        <dbReference type="HAMAP-Rule" id="MF_00419"/>
    </source>
</evidence>
<evidence type="ECO:0000305" key="2"/>
<sequence>MRILRGSPALSEFRVNKLLELCREQDLPVTGIYAEFMHFADLTSELDAEALEKLEKLLTYGPTIEEHEPQGLLLLVTPRPGTISPWSSKATDIAQNCGLNAVKRLERGTAYYVESSSELSSVQIDIVKSIIHDRMMEAVFGDLEAAAALFSVAQPAPMTQVDILSGGRLALEEANVSLGLALAEDEIDYLVENFTKLGRNPNDIELMMFAQANSEHCRHKIFNADWTIDGVEQPKSLFKMIKNTFETTPDHVLSAYKDNAAVMTGSKVGRFFPDPETRQYNYHHEDAHILMKVETHNHPTAISPWPGASTGSGGEIRDEGATGIGGKPKAGLVGFTTSNLRIPGFEQPWETDFGKPGRIVNALDIMLEGPLGGAAFNNEFGRPNLLGYFRTYEEKVTSHAGEEVRGYHKPIMIAGGMGNIRDEHVQKKEIPVGASLIVLGGPAMNIGLGGGAASSMASGQSAEDLDFASVQRENPEMERRCQEVIDRCWQLGDNNPIAFIHDVGAGGISNALPELVNDGERGGKFQLRDVPNDEPGMSPLEIWCNESQERYVLAVAPENMAAFDAICKRERAPYAVVGVATEERHLTLEDAHFDNTPIDMPMDILLGKPPKMHREATTLKVDSPAMTRDGIELNEAVDRVLRLPTVAEKTFLITIGDRTVTGLVARDQMVGPWQVPVANCAVTAASYDTYHGEAMSMGERTPVALLDFGASARLAVGESLTNIAATDIGDIKRIKLSANWMSPAGHPGEDAGLYEAVKAVGEELCPALGLTIPVGKDSMSMKTKWNENGEEKEVTSPLSLIITAFARVEDVRKTITPQLRTDKGETSLVLVDLGNGKNRLGATALAQVYKQLGDKPADVDNAEQLKGFFDAMQALVRQDKLLAYHDKGDGGLLVTLAEMAFAGHCGVNANIAALGDDVLAALFNEELGAVVQVKNDELDSVLSTLAANGLEACSHVIGAIDASDNFVIRSGDVVVLERSRTDLRVIWAETTHKMQALRDNPACADQEFEAKKDNSDPGLNVSLSYEVNEDIAAPYIAKGAKPKMAILREQGVNSHVEMAAAFDRAGFEATDIHMSDILTGQAVLDEYHGLVACGGFSYGDVLGAGEGWAKSVLFNAQAREQFQAFFNRENTFSLGVCNGCQMLSNLKELIPGADLWPRFVRNESERFEARFSLVEVQKSDSVFFDGMAGSRMPIAVSHGEGRVEVRDAQHLAAIEASGTVAVRFVDNLGNPTQQYPNNPNGSPNAITGLTTKDGRVTIMMPHPERVFRTVANSWAPEGWGENGAWMRMFQNARKNLA</sequence>
<gene>
    <name evidence="1" type="primary">purL</name>
    <name type="ordered locus">VV0847</name>
</gene>
<keyword id="KW-0067">ATP-binding</keyword>
<keyword id="KW-0963">Cytoplasm</keyword>
<keyword id="KW-0315">Glutamine amidotransferase</keyword>
<keyword id="KW-0436">Ligase</keyword>
<keyword id="KW-0460">Magnesium</keyword>
<keyword id="KW-0479">Metal-binding</keyword>
<keyword id="KW-0547">Nucleotide-binding</keyword>
<keyword id="KW-0658">Purine biosynthesis</keyword>